<dbReference type="EC" id="2.8.1.13" evidence="1"/>
<dbReference type="EMBL" id="AM999887">
    <property type="protein sequence ID" value="CAQ54908.1"/>
    <property type="molecule type" value="Genomic_DNA"/>
</dbReference>
<dbReference type="RefSeq" id="WP_007302211.1">
    <property type="nucleotide sequence ID" value="NC_010981.1"/>
</dbReference>
<dbReference type="SMR" id="B3CLZ0"/>
<dbReference type="KEGG" id="wpi:WP0800"/>
<dbReference type="eggNOG" id="COG0482">
    <property type="taxonomic scope" value="Bacteria"/>
</dbReference>
<dbReference type="HOGENOM" id="CLU_035188_0_1_5"/>
<dbReference type="Proteomes" id="UP000008814">
    <property type="component" value="Chromosome"/>
</dbReference>
<dbReference type="GO" id="GO:0005737">
    <property type="term" value="C:cytoplasm"/>
    <property type="evidence" value="ECO:0007669"/>
    <property type="project" value="UniProtKB-SubCell"/>
</dbReference>
<dbReference type="GO" id="GO:0005524">
    <property type="term" value="F:ATP binding"/>
    <property type="evidence" value="ECO:0007669"/>
    <property type="project" value="UniProtKB-KW"/>
</dbReference>
<dbReference type="GO" id="GO:0000049">
    <property type="term" value="F:tRNA binding"/>
    <property type="evidence" value="ECO:0007669"/>
    <property type="project" value="UniProtKB-KW"/>
</dbReference>
<dbReference type="GO" id="GO:0103016">
    <property type="term" value="F:tRNA-uridine 2-sulfurtransferase activity"/>
    <property type="evidence" value="ECO:0007669"/>
    <property type="project" value="UniProtKB-EC"/>
</dbReference>
<dbReference type="GO" id="GO:0002143">
    <property type="term" value="P:tRNA wobble position uridine thiolation"/>
    <property type="evidence" value="ECO:0007669"/>
    <property type="project" value="TreeGrafter"/>
</dbReference>
<dbReference type="CDD" id="cd01998">
    <property type="entry name" value="MnmA_TRMU-like"/>
    <property type="match status" value="1"/>
</dbReference>
<dbReference type="FunFam" id="2.30.30.280:FF:000001">
    <property type="entry name" value="tRNA-specific 2-thiouridylase MnmA"/>
    <property type="match status" value="1"/>
</dbReference>
<dbReference type="FunFam" id="3.40.50.620:FF:000115">
    <property type="entry name" value="tRNA-specific 2-thiouridylase MnmA"/>
    <property type="match status" value="1"/>
</dbReference>
<dbReference type="Gene3D" id="2.30.30.280">
    <property type="entry name" value="Adenine nucleotide alpha hydrolases-like domains"/>
    <property type="match status" value="1"/>
</dbReference>
<dbReference type="Gene3D" id="3.40.50.620">
    <property type="entry name" value="HUPs"/>
    <property type="match status" value="1"/>
</dbReference>
<dbReference type="Gene3D" id="2.40.30.10">
    <property type="entry name" value="Translation factors"/>
    <property type="match status" value="1"/>
</dbReference>
<dbReference type="HAMAP" id="MF_00144">
    <property type="entry name" value="tRNA_thiouridyl_MnmA"/>
    <property type="match status" value="1"/>
</dbReference>
<dbReference type="InterPro" id="IPR004506">
    <property type="entry name" value="MnmA-like"/>
</dbReference>
<dbReference type="InterPro" id="IPR046885">
    <property type="entry name" value="MnmA-like_C"/>
</dbReference>
<dbReference type="InterPro" id="IPR046884">
    <property type="entry name" value="MnmA-like_central"/>
</dbReference>
<dbReference type="InterPro" id="IPR023382">
    <property type="entry name" value="MnmA-like_central_sf"/>
</dbReference>
<dbReference type="InterPro" id="IPR014729">
    <property type="entry name" value="Rossmann-like_a/b/a_fold"/>
</dbReference>
<dbReference type="NCBIfam" id="NF001138">
    <property type="entry name" value="PRK00143.1"/>
    <property type="match status" value="1"/>
</dbReference>
<dbReference type="NCBIfam" id="TIGR00420">
    <property type="entry name" value="trmU"/>
    <property type="match status" value="1"/>
</dbReference>
<dbReference type="PANTHER" id="PTHR11933:SF5">
    <property type="entry name" value="MITOCHONDRIAL TRNA-SPECIFIC 2-THIOURIDYLASE 1"/>
    <property type="match status" value="1"/>
</dbReference>
<dbReference type="PANTHER" id="PTHR11933">
    <property type="entry name" value="TRNA 5-METHYLAMINOMETHYL-2-THIOURIDYLATE -METHYLTRANSFERASE"/>
    <property type="match status" value="1"/>
</dbReference>
<dbReference type="Pfam" id="PF03054">
    <property type="entry name" value="tRNA_Me_trans"/>
    <property type="match status" value="1"/>
</dbReference>
<dbReference type="Pfam" id="PF20258">
    <property type="entry name" value="tRNA_Me_trans_C"/>
    <property type="match status" value="1"/>
</dbReference>
<dbReference type="Pfam" id="PF20259">
    <property type="entry name" value="tRNA_Me_trans_M"/>
    <property type="match status" value="1"/>
</dbReference>
<dbReference type="SUPFAM" id="SSF52402">
    <property type="entry name" value="Adenine nucleotide alpha hydrolases-like"/>
    <property type="match status" value="1"/>
</dbReference>
<protein>
    <recommendedName>
        <fullName evidence="1">tRNA-specific 2-thiouridylase MnmA</fullName>
        <ecNumber evidence="1">2.8.1.13</ecNumber>
    </recommendedName>
</protein>
<keyword id="KW-0067">ATP-binding</keyword>
<keyword id="KW-0963">Cytoplasm</keyword>
<keyword id="KW-1015">Disulfide bond</keyword>
<keyword id="KW-0547">Nucleotide-binding</keyword>
<keyword id="KW-0694">RNA-binding</keyword>
<keyword id="KW-0808">Transferase</keyword>
<keyword id="KW-0819">tRNA processing</keyword>
<keyword id="KW-0820">tRNA-binding</keyword>
<name>MNMA_WOLPP</name>
<organism>
    <name type="scientific">Wolbachia pipientis subsp. Culex pipiens (strain wPip)</name>
    <dbReference type="NCBI Taxonomy" id="570417"/>
    <lineage>
        <taxon>Bacteria</taxon>
        <taxon>Pseudomonadati</taxon>
        <taxon>Pseudomonadota</taxon>
        <taxon>Alphaproteobacteria</taxon>
        <taxon>Rickettsiales</taxon>
        <taxon>Anaplasmataceae</taxon>
        <taxon>Wolbachieae</taxon>
        <taxon>Wolbachia</taxon>
    </lineage>
</organism>
<sequence>MLKEFEIEPLLKDKAPHQTKAIVAMSGGVDSSVAAALLYNLGYEVIGVTLQLYGSDGNARKGACCAGQDIYDAKYVAESVGFPHYILNYEEIFKKEVIEDFANTYMRGETPIPCVRCNQTVKFRDLLQVTKNLGADVLVTGHYVRRLEENGEVKLCRSIDKSKDQSYFLFATTEEQLKLLRFPLGGFYKSDIRKLAKYFGLQISEKPDSQDICFVSESYSKTIAKLAPQSVQKGKIVDIHGKVLGEHSGIVNFTVGQRRGLCIAHNEPLYVIKINTENNEVVVGPINALMQKKILVKELNWLEQPKEGMEVTVKLRSSHAGSSATIYSTDEKNKACVILNDDYFGISPGQACVAYKGEQVIGGGWICS</sequence>
<reference key="1">
    <citation type="journal article" date="2008" name="Mol. Biol. Evol.">
        <title>Genome evolution of Wolbachia strain wPip from the Culex pipiens group.</title>
        <authorList>
            <person name="Klasson L."/>
            <person name="Walker T."/>
            <person name="Sebaihia M."/>
            <person name="Sanders M.J."/>
            <person name="Quail M.A."/>
            <person name="Lord A."/>
            <person name="Sanders S."/>
            <person name="Earl J."/>
            <person name="O'Neill S.L."/>
            <person name="Thomson N."/>
            <person name="Sinkins S.P."/>
            <person name="Parkhill J."/>
        </authorList>
    </citation>
    <scope>NUCLEOTIDE SEQUENCE [LARGE SCALE GENOMIC DNA]</scope>
    <source>
        <strain>wPip</strain>
    </source>
</reference>
<proteinExistence type="inferred from homology"/>
<comment type="function">
    <text evidence="1">Catalyzes the 2-thiolation of uridine at the wobble position (U34) of tRNA, leading to the formation of s(2)U34.</text>
</comment>
<comment type="catalytic activity">
    <reaction evidence="1">
        <text>S-sulfanyl-L-cysteinyl-[protein] + uridine(34) in tRNA + AH2 + ATP = 2-thiouridine(34) in tRNA + L-cysteinyl-[protein] + A + AMP + diphosphate + H(+)</text>
        <dbReference type="Rhea" id="RHEA:47032"/>
        <dbReference type="Rhea" id="RHEA-COMP:10131"/>
        <dbReference type="Rhea" id="RHEA-COMP:11726"/>
        <dbReference type="Rhea" id="RHEA-COMP:11727"/>
        <dbReference type="Rhea" id="RHEA-COMP:11728"/>
        <dbReference type="ChEBI" id="CHEBI:13193"/>
        <dbReference type="ChEBI" id="CHEBI:15378"/>
        <dbReference type="ChEBI" id="CHEBI:17499"/>
        <dbReference type="ChEBI" id="CHEBI:29950"/>
        <dbReference type="ChEBI" id="CHEBI:30616"/>
        <dbReference type="ChEBI" id="CHEBI:33019"/>
        <dbReference type="ChEBI" id="CHEBI:61963"/>
        <dbReference type="ChEBI" id="CHEBI:65315"/>
        <dbReference type="ChEBI" id="CHEBI:87170"/>
        <dbReference type="ChEBI" id="CHEBI:456215"/>
        <dbReference type="EC" id="2.8.1.13"/>
    </reaction>
</comment>
<comment type="subcellular location">
    <subcellularLocation>
        <location evidence="1">Cytoplasm</location>
    </subcellularLocation>
</comment>
<comment type="similarity">
    <text evidence="1">Belongs to the MnmA/TRMU family.</text>
</comment>
<accession>B3CLZ0</accession>
<feature type="chain" id="PRO_1000096310" description="tRNA-specific 2-thiouridylase MnmA">
    <location>
        <begin position="1"/>
        <end position="368"/>
    </location>
</feature>
<feature type="region of interest" description="Interaction with tRNA" evidence="1">
    <location>
        <begin position="163"/>
        <end position="165"/>
    </location>
</feature>
<feature type="active site" description="Nucleophile" evidence="1">
    <location>
        <position position="117"/>
    </location>
</feature>
<feature type="active site" description="Cysteine persulfide intermediate" evidence="1">
    <location>
        <position position="213"/>
    </location>
</feature>
<feature type="binding site" evidence="1">
    <location>
        <begin position="24"/>
        <end position="31"/>
    </location>
    <ligand>
        <name>ATP</name>
        <dbReference type="ChEBI" id="CHEBI:30616"/>
    </ligand>
</feature>
<feature type="binding site" evidence="1">
    <location>
        <position position="50"/>
    </location>
    <ligand>
        <name>ATP</name>
        <dbReference type="ChEBI" id="CHEBI:30616"/>
    </ligand>
</feature>
<feature type="binding site" evidence="1">
    <location>
        <position position="141"/>
    </location>
    <ligand>
        <name>ATP</name>
        <dbReference type="ChEBI" id="CHEBI:30616"/>
    </ligand>
</feature>
<feature type="site" description="Interaction with tRNA" evidence="1">
    <location>
        <position position="142"/>
    </location>
</feature>
<feature type="site" description="Interaction with tRNA" evidence="1">
    <location>
        <position position="350"/>
    </location>
</feature>
<feature type="disulfide bond" description="Alternate" evidence="1">
    <location>
        <begin position="117"/>
        <end position="213"/>
    </location>
</feature>
<gene>
    <name evidence="1" type="primary">mnmA</name>
    <name type="ordered locus">WP0800</name>
</gene>
<evidence type="ECO:0000255" key="1">
    <source>
        <dbReference type="HAMAP-Rule" id="MF_00144"/>
    </source>
</evidence>